<accession>Q9LS72</accession>
<sequence length="600" mass="67338">MTSSLPVRAPSWVSSRRIFEERLQDLPKCANLNQVKQLHAQIIRRNLHEDLHIAPKLISALSLCRQTNLAVRVFNQVQEPNVHLCNSLIRAHAQNSQPYQAFFVFSEMQRFGLFADNFTYPFLLKACSGQSWLPVVKMMHNHIEKLGLSSDIYVPNALIDCYSRCGGLGVRDAMKLFEKMSERDTVSWNSMLGGLVKAGELRDARRLFDEMPQRDLISWNTMLDGYARCREMSKAFELFEKMPERNTVSWSTMVMGYSKAGDMEMARVMFDKMPLPAKNVVTWTIIIAGYAEKGLLKEADRLVDQMVASGLKFDAAAVISILAACTESGLLSLGMRIHSILKRSNLGSNAYVLNALLDMYAKCGNLKKAFDVFNDIPKKDLVSWNTMLHGLGVHGHGKEAIELFSRMRREGIRPDKVTFIAVLCSCNHAGLIDEGIDYFYSMEKVYDLVPQVEHYGCLVDLLGRVGRLKEAIKVVQTMPMEPNVVIWGALLGACRMHNEVDIAKEVLDNLVKLDPCDPGNYSLLSNIYAAAEDWEGVADIRSKMKSMGVEKPSGASSVELEDGIHEFTVFDKSHPKSDQIYQMLGSLIEPPDPGELVAVR</sequence>
<keyword id="KW-1185">Reference proteome</keyword>
<keyword id="KW-0677">Repeat</keyword>
<feature type="chain" id="PRO_0000356120" description="Pentatricopeptide repeat-containing protein At3g29230">
    <location>
        <begin position="1"/>
        <end position="600"/>
    </location>
</feature>
<feature type="repeat" description="PPR 1">
    <location>
        <begin position="50"/>
        <end position="80"/>
    </location>
</feature>
<feature type="repeat" description="PPR 2">
    <location>
        <begin position="81"/>
        <end position="115"/>
    </location>
</feature>
<feature type="repeat" description="PPR 3">
    <location>
        <begin position="116"/>
        <end position="150"/>
    </location>
</feature>
<feature type="repeat" description="PPR 4">
    <location>
        <begin position="151"/>
        <end position="183"/>
    </location>
</feature>
<feature type="repeat" description="PPR 5">
    <location>
        <begin position="184"/>
        <end position="218"/>
    </location>
</feature>
<feature type="repeat" description="PPR 6">
    <location>
        <begin position="219"/>
        <end position="245"/>
    </location>
</feature>
<feature type="repeat" description="PPR 7">
    <location>
        <begin position="246"/>
        <end position="276"/>
    </location>
</feature>
<feature type="repeat" description="PPR 8">
    <location>
        <begin position="279"/>
        <end position="313"/>
    </location>
</feature>
<feature type="repeat" description="PPR 9">
    <location>
        <begin position="314"/>
        <end position="348"/>
    </location>
</feature>
<feature type="repeat" description="PPR 10">
    <location>
        <begin position="349"/>
        <end position="379"/>
    </location>
</feature>
<feature type="repeat" description="PPR 11">
    <location>
        <begin position="380"/>
        <end position="414"/>
    </location>
</feature>
<feature type="repeat" description="PPR 12">
    <location>
        <begin position="415"/>
        <end position="445"/>
    </location>
</feature>
<feature type="repeat" description="PPR 13">
    <location>
        <begin position="451"/>
        <end position="481"/>
    </location>
</feature>
<feature type="region of interest" description="Type E motif">
    <location>
        <begin position="486"/>
        <end position="561"/>
    </location>
</feature>
<feature type="region of interest" description="Type E(+) motif">
    <location>
        <begin position="562"/>
        <end position="592"/>
    </location>
</feature>
<gene>
    <name type="primary">PCMP-E27</name>
    <name type="ordered locus">At3g29230</name>
    <name type="ORF">MXO21.8</name>
</gene>
<name>PP261_ARATH</name>
<reference key="1">
    <citation type="journal article" date="2000" name="DNA Res.">
        <title>Structural analysis of Arabidopsis thaliana chromosome 3. I. Sequence features of the regions of 4,504,864 bp covered by sixty P1 and TAC clones.</title>
        <authorList>
            <person name="Sato S."/>
            <person name="Nakamura Y."/>
            <person name="Kaneko T."/>
            <person name="Katoh T."/>
            <person name="Asamizu E."/>
            <person name="Tabata S."/>
        </authorList>
    </citation>
    <scope>NUCLEOTIDE SEQUENCE [LARGE SCALE GENOMIC DNA]</scope>
    <source>
        <strain>cv. Columbia</strain>
    </source>
</reference>
<reference key="2">
    <citation type="journal article" date="2017" name="Plant J.">
        <title>Araport11: a complete reannotation of the Arabidopsis thaliana reference genome.</title>
        <authorList>
            <person name="Cheng C.Y."/>
            <person name="Krishnakumar V."/>
            <person name="Chan A.P."/>
            <person name="Thibaud-Nissen F."/>
            <person name="Schobel S."/>
            <person name="Town C.D."/>
        </authorList>
    </citation>
    <scope>GENOME REANNOTATION</scope>
    <source>
        <strain>cv. Columbia</strain>
    </source>
</reference>
<reference key="3">
    <citation type="journal article" date="2000" name="Plant Mol. Biol.">
        <title>In Arabidopsis thaliana, 1% of the genome codes for a novel protein family unique to plants.</title>
        <authorList>
            <person name="Aubourg S."/>
            <person name="Boudet N."/>
            <person name="Kreis M."/>
            <person name="Lecharny A."/>
        </authorList>
    </citation>
    <scope>GENE FAMILY</scope>
</reference>
<reference key="4">
    <citation type="journal article" date="2004" name="Plant Cell">
        <title>Genome-wide analysis of Arabidopsis pentatricopeptide repeat proteins reveals their essential role in organelle biogenesis.</title>
        <authorList>
            <person name="Lurin C."/>
            <person name="Andres C."/>
            <person name="Aubourg S."/>
            <person name="Bellaoui M."/>
            <person name="Bitton F."/>
            <person name="Bruyere C."/>
            <person name="Caboche M."/>
            <person name="Debast C."/>
            <person name="Gualberto J."/>
            <person name="Hoffmann B."/>
            <person name="Lecharny A."/>
            <person name="Le Ret M."/>
            <person name="Martin-Magniette M.-L."/>
            <person name="Mireau H."/>
            <person name="Peeters N."/>
            <person name="Renou J.-P."/>
            <person name="Szurek B."/>
            <person name="Taconnat L."/>
            <person name="Small I."/>
        </authorList>
    </citation>
    <scope>GENE FAMILY</scope>
</reference>
<organism>
    <name type="scientific">Arabidopsis thaliana</name>
    <name type="common">Mouse-ear cress</name>
    <dbReference type="NCBI Taxonomy" id="3702"/>
    <lineage>
        <taxon>Eukaryota</taxon>
        <taxon>Viridiplantae</taxon>
        <taxon>Streptophyta</taxon>
        <taxon>Embryophyta</taxon>
        <taxon>Tracheophyta</taxon>
        <taxon>Spermatophyta</taxon>
        <taxon>Magnoliopsida</taxon>
        <taxon>eudicotyledons</taxon>
        <taxon>Gunneridae</taxon>
        <taxon>Pentapetalae</taxon>
        <taxon>rosids</taxon>
        <taxon>malvids</taxon>
        <taxon>Brassicales</taxon>
        <taxon>Brassicaceae</taxon>
        <taxon>Camelineae</taxon>
        <taxon>Arabidopsis</taxon>
    </lineage>
</organism>
<proteinExistence type="evidence at transcript level"/>
<comment type="similarity">
    <text evidence="1">Belongs to the PPR family. PCMP-E subfamily.</text>
</comment>
<comment type="online information" name="Pentatricopeptide repeat proteins">
    <link uri="https://ppr.plantenergy.uwa.edu.au"/>
</comment>
<evidence type="ECO:0000305" key="1"/>
<protein>
    <recommendedName>
        <fullName>Pentatricopeptide repeat-containing protein At3g29230</fullName>
    </recommendedName>
</protein>
<dbReference type="EMBL" id="AB026657">
    <property type="protein sequence ID" value="BAB01819.1"/>
    <property type="molecule type" value="Genomic_DNA"/>
</dbReference>
<dbReference type="EMBL" id="CP002686">
    <property type="protein sequence ID" value="AEE77553.1"/>
    <property type="molecule type" value="Genomic_DNA"/>
</dbReference>
<dbReference type="RefSeq" id="NP_189568.1">
    <property type="nucleotide sequence ID" value="NM_113847.2"/>
</dbReference>
<dbReference type="SMR" id="Q9LS72"/>
<dbReference type="FunCoup" id="Q9LS72">
    <property type="interactions" value="1311"/>
</dbReference>
<dbReference type="STRING" id="3702.Q9LS72"/>
<dbReference type="iPTMnet" id="Q9LS72"/>
<dbReference type="PaxDb" id="3702-AT3G29230.1"/>
<dbReference type="ProteomicsDB" id="249191"/>
<dbReference type="EnsemblPlants" id="AT3G29230.1">
    <property type="protein sequence ID" value="AT3G29230.1"/>
    <property type="gene ID" value="AT3G29230"/>
</dbReference>
<dbReference type="GeneID" id="822578"/>
<dbReference type="Gramene" id="AT3G29230.1">
    <property type="protein sequence ID" value="AT3G29230.1"/>
    <property type="gene ID" value="AT3G29230"/>
</dbReference>
<dbReference type="KEGG" id="ath:AT3G29230"/>
<dbReference type="Araport" id="AT3G29230"/>
<dbReference type="TAIR" id="AT3G29230"/>
<dbReference type="eggNOG" id="KOG4197">
    <property type="taxonomic scope" value="Eukaryota"/>
</dbReference>
<dbReference type="HOGENOM" id="CLU_002706_0_6_1"/>
<dbReference type="InParanoid" id="Q9LS72"/>
<dbReference type="OMA" id="ACRMHNE"/>
<dbReference type="PhylomeDB" id="Q9LS72"/>
<dbReference type="PRO" id="PR:Q9LS72"/>
<dbReference type="Proteomes" id="UP000006548">
    <property type="component" value="Chromosome 3"/>
</dbReference>
<dbReference type="ExpressionAtlas" id="Q9LS72">
    <property type="expression patterns" value="baseline and differential"/>
</dbReference>
<dbReference type="GO" id="GO:0003729">
    <property type="term" value="F:mRNA binding"/>
    <property type="evidence" value="ECO:0000314"/>
    <property type="project" value="TAIR"/>
</dbReference>
<dbReference type="GO" id="GO:0009451">
    <property type="term" value="P:RNA modification"/>
    <property type="evidence" value="ECO:0007669"/>
    <property type="project" value="InterPro"/>
</dbReference>
<dbReference type="FunFam" id="1.25.40.10:FF:000584">
    <property type="entry name" value="Pentatricopeptide repeat-containing protein"/>
    <property type="match status" value="1"/>
</dbReference>
<dbReference type="FunFam" id="1.25.40.10:FF:000031">
    <property type="entry name" value="Pentatricopeptide repeat-containing protein mitochondrial"/>
    <property type="match status" value="1"/>
</dbReference>
<dbReference type="FunFam" id="1.25.40.10:FF:000557">
    <property type="entry name" value="Pentatricopeptide repeat-containing protein, chloroplastic"/>
    <property type="match status" value="1"/>
</dbReference>
<dbReference type="FunFam" id="1.25.40.10:FF:001497">
    <property type="entry name" value="Pentatricopeptide repeat-containing protein, chloroplastic"/>
    <property type="match status" value="1"/>
</dbReference>
<dbReference type="Gene3D" id="1.25.40.10">
    <property type="entry name" value="Tetratricopeptide repeat domain"/>
    <property type="match status" value="5"/>
</dbReference>
<dbReference type="InterPro" id="IPR046848">
    <property type="entry name" value="E_motif"/>
</dbReference>
<dbReference type="InterPro" id="IPR046849">
    <property type="entry name" value="Eplus_motif"/>
</dbReference>
<dbReference type="InterPro" id="IPR002885">
    <property type="entry name" value="Pentatricopeptide_rpt"/>
</dbReference>
<dbReference type="InterPro" id="IPR046960">
    <property type="entry name" value="PPR_At4g14850-like_plant"/>
</dbReference>
<dbReference type="InterPro" id="IPR011990">
    <property type="entry name" value="TPR-like_helical_dom_sf"/>
</dbReference>
<dbReference type="NCBIfam" id="TIGR00756">
    <property type="entry name" value="PPR"/>
    <property type="match status" value="7"/>
</dbReference>
<dbReference type="PANTHER" id="PTHR47926">
    <property type="entry name" value="PENTATRICOPEPTIDE REPEAT-CONTAINING PROTEIN"/>
    <property type="match status" value="1"/>
</dbReference>
<dbReference type="PANTHER" id="PTHR47926:SF413">
    <property type="entry name" value="REPEAT (TPR)-LIKE SUPERFAMILY PROTEIN, PUTATIVE-RELATED"/>
    <property type="match status" value="1"/>
</dbReference>
<dbReference type="Pfam" id="PF20431">
    <property type="entry name" value="E_motif"/>
    <property type="match status" value="1"/>
</dbReference>
<dbReference type="Pfam" id="PF20430">
    <property type="entry name" value="Eplus_motif"/>
    <property type="match status" value="1"/>
</dbReference>
<dbReference type="Pfam" id="PF01535">
    <property type="entry name" value="PPR"/>
    <property type="match status" value="3"/>
</dbReference>
<dbReference type="Pfam" id="PF13041">
    <property type="entry name" value="PPR_2"/>
    <property type="match status" value="4"/>
</dbReference>
<dbReference type="PROSITE" id="PS51375">
    <property type="entry name" value="PPR"/>
    <property type="match status" value="14"/>
</dbReference>